<feature type="chain" id="PRO_0000159582" description="Pollen-specific protein SF21">
    <location>
        <begin position="1"/>
        <end position="352"/>
    </location>
</feature>
<gene>
    <name type="primary">SF21</name>
</gene>
<sequence>MADSGHSISVTFPSFHSGGKEHIIRTGCGSVSVTVCGDQEKPPLITYPDLALNHMSCFQGLFVSPESASLLLHNFCIYHINPPGHELGAASIGIDDPVPSIEDLCDQILVVLNYFRLGSVMCMGAMAGAYILTLFSIKYSERVTGLILISPICKAPSWTERFYNKLTSKTLYYYGMCDLVKELLIHRYFSKEVCGNPEIPESDMVLACRKLLDERDSVNVWRYLQAIDSRRDITEELKSLECKTIIFVGDSSPFHDEALQIAEKLGTNCSALVEVHACGSMVTQEQPHAMLIPLENFLKGFGLYRPCRYSNSPRSPLGPSSIDPELLYPEKMGLKLRPIKLRVSPQPRAHKN</sequence>
<name>SF21_HELAN</name>
<dbReference type="EMBL" id="Y09057">
    <property type="protein sequence ID" value="CAA70260.1"/>
    <property type="molecule type" value="mRNA"/>
</dbReference>
<dbReference type="PIR" id="T13993">
    <property type="entry name" value="T13993"/>
</dbReference>
<dbReference type="SMR" id="O23969"/>
<dbReference type="ESTHER" id="helan-sf21">
    <property type="family name" value="Ndr_family"/>
</dbReference>
<dbReference type="Gene3D" id="3.40.50.1820">
    <property type="entry name" value="alpha/beta hydrolase"/>
    <property type="match status" value="1"/>
</dbReference>
<dbReference type="InterPro" id="IPR029058">
    <property type="entry name" value="AB_hydrolase_fold"/>
</dbReference>
<dbReference type="InterPro" id="IPR004142">
    <property type="entry name" value="NDRG"/>
</dbReference>
<dbReference type="PANTHER" id="PTHR11034">
    <property type="entry name" value="N-MYC DOWNSTREAM REGULATED"/>
    <property type="match status" value="1"/>
</dbReference>
<dbReference type="Pfam" id="PF03096">
    <property type="entry name" value="Ndr"/>
    <property type="match status" value="1"/>
</dbReference>
<dbReference type="SUPFAM" id="SSF53474">
    <property type="entry name" value="alpha/beta-Hydrolases"/>
    <property type="match status" value="1"/>
</dbReference>
<proteinExistence type="evidence at transcript level"/>
<comment type="tissue specificity">
    <text>Pollen.</text>
</comment>
<comment type="similarity">
    <text evidence="1">Belongs to the NDRG family.</text>
</comment>
<accession>O23969</accession>
<evidence type="ECO:0000305" key="1"/>
<protein>
    <recommendedName>
        <fullName>Pollen-specific protein SF21</fullName>
    </recommendedName>
</protein>
<organism>
    <name type="scientific">Helianthus annuus</name>
    <name type="common">Common sunflower</name>
    <dbReference type="NCBI Taxonomy" id="4232"/>
    <lineage>
        <taxon>Eukaryota</taxon>
        <taxon>Viridiplantae</taxon>
        <taxon>Streptophyta</taxon>
        <taxon>Embryophyta</taxon>
        <taxon>Tracheophyta</taxon>
        <taxon>Spermatophyta</taxon>
        <taxon>Magnoliopsida</taxon>
        <taxon>eudicotyledons</taxon>
        <taxon>Gunneridae</taxon>
        <taxon>Pentapetalae</taxon>
        <taxon>asterids</taxon>
        <taxon>campanulids</taxon>
        <taxon>Asterales</taxon>
        <taxon>Asteraceae</taxon>
        <taxon>Asteroideae</taxon>
        <taxon>Heliantheae alliance</taxon>
        <taxon>Heliantheae</taxon>
        <taxon>Helianthus</taxon>
    </lineage>
</organism>
<reference key="1">
    <citation type="journal article" date="1997" name="Plant Sci.">
        <title>A transmitting tissue- and pollen-expressed protein from sunflower with sequence similarity to the human RTP protein.</title>
        <authorList>
            <person name="Kruter-Canham R."/>
            <person name="Bronner R."/>
            <person name="Evrand J.L."/>
            <person name="Hahne G."/>
            <person name="Friedt W."/>
            <person name="Steinmetz A."/>
        </authorList>
    </citation>
    <scope>NUCLEOTIDE SEQUENCE [MRNA]</scope>
    <source>
        <tissue>Flower</tissue>
    </source>
</reference>